<feature type="chain" id="PRO_0000325398" description="3-phosphoshikimate 1-carboxyvinyltransferase">
    <location>
        <begin position="1"/>
        <end position="445"/>
    </location>
</feature>
<feature type="active site" description="Proton acceptor" evidence="1">
    <location>
        <position position="324"/>
    </location>
</feature>
<feature type="binding site" evidence="1">
    <location>
        <position position="25"/>
    </location>
    <ligand>
        <name>3-phosphoshikimate</name>
        <dbReference type="ChEBI" id="CHEBI:145989"/>
    </ligand>
</feature>
<feature type="binding site" evidence="1">
    <location>
        <position position="25"/>
    </location>
    <ligand>
        <name>phosphoenolpyruvate</name>
        <dbReference type="ChEBI" id="CHEBI:58702"/>
    </ligand>
</feature>
<feature type="binding site" evidence="1">
    <location>
        <position position="26"/>
    </location>
    <ligand>
        <name>3-phosphoshikimate</name>
        <dbReference type="ChEBI" id="CHEBI:145989"/>
    </ligand>
</feature>
<feature type="binding site" evidence="1">
    <location>
        <position position="30"/>
    </location>
    <ligand>
        <name>3-phosphoshikimate</name>
        <dbReference type="ChEBI" id="CHEBI:145989"/>
    </ligand>
</feature>
<feature type="binding site" evidence="1">
    <location>
        <position position="98"/>
    </location>
    <ligand>
        <name>phosphoenolpyruvate</name>
        <dbReference type="ChEBI" id="CHEBI:58702"/>
    </ligand>
</feature>
<feature type="binding site" evidence="1">
    <location>
        <position position="126"/>
    </location>
    <ligand>
        <name>phosphoenolpyruvate</name>
        <dbReference type="ChEBI" id="CHEBI:58702"/>
    </ligand>
</feature>
<feature type="binding site" evidence="1">
    <location>
        <position position="171"/>
    </location>
    <ligand>
        <name>3-phosphoshikimate</name>
        <dbReference type="ChEBI" id="CHEBI:145989"/>
    </ligand>
</feature>
<feature type="binding site" evidence="1">
    <location>
        <position position="173"/>
    </location>
    <ligand>
        <name>3-phosphoshikimate</name>
        <dbReference type="ChEBI" id="CHEBI:145989"/>
    </ligand>
</feature>
<feature type="binding site" evidence="1">
    <location>
        <position position="173"/>
    </location>
    <ligand>
        <name>phosphoenolpyruvate</name>
        <dbReference type="ChEBI" id="CHEBI:58702"/>
    </ligand>
</feature>
<feature type="binding site" evidence="1">
    <location>
        <position position="324"/>
    </location>
    <ligand>
        <name>3-phosphoshikimate</name>
        <dbReference type="ChEBI" id="CHEBI:145989"/>
    </ligand>
</feature>
<feature type="binding site" evidence="1">
    <location>
        <position position="351"/>
    </location>
    <ligand>
        <name>3-phosphoshikimate</name>
        <dbReference type="ChEBI" id="CHEBI:145989"/>
    </ligand>
</feature>
<feature type="binding site" evidence="1">
    <location>
        <position position="355"/>
    </location>
    <ligand>
        <name>phosphoenolpyruvate</name>
        <dbReference type="ChEBI" id="CHEBI:58702"/>
    </ligand>
</feature>
<feature type="binding site" evidence="1">
    <location>
        <position position="398"/>
    </location>
    <ligand>
        <name>phosphoenolpyruvate</name>
        <dbReference type="ChEBI" id="CHEBI:58702"/>
    </ligand>
</feature>
<organism>
    <name type="scientific">Hydrogenovibrio crunogenus (strain DSM 25203 / XCL-2)</name>
    <name type="common">Thiomicrospira crunogena</name>
    <dbReference type="NCBI Taxonomy" id="317025"/>
    <lineage>
        <taxon>Bacteria</taxon>
        <taxon>Pseudomonadati</taxon>
        <taxon>Pseudomonadota</taxon>
        <taxon>Gammaproteobacteria</taxon>
        <taxon>Thiotrichales</taxon>
        <taxon>Piscirickettsiaceae</taxon>
        <taxon>Hydrogenovibrio</taxon>
    </lineage>
</organism>
<proteinExistence type="inferred from homology"/>
<name>AROA_HYDCU</name>
<reference key="1">
    <citation type="journal article" date="2006" name="PLoS Biol.">
        <title>The genome of deep-sea vent chemolithoautotroph Thiomicrospira crunogena XCL-2.</title>
        <authorList>
            <person name="Scott K.M."/>
            <person name="Sievert S.M."/>
            <person name="Abril F.N."/>
            <person name="Ball L.A."/>
            <person name="Barrett C.J."/>
            <person name="Blake R.A."/>
            <person name="Boller A.J."/>
            <person name="Chain P.S.G."/>
            <person name="Clark J.A."/>
            <person name="Davis C.R."/>
            <person name="Detter C."/>
            <person name="Do K.F."/>
            <person name="Dobrinski K.P."/>
            <person name="Faza B.I."/>
            <person name="Fitzpatrick K.A."/>
            <person name="Freyermuth S.K."/>
            <person name="Harmer T.L."/>
            <person name="Hauser L.J."/>
            <person name="Huegler M."/>
            <person name="Kerfeld C.A."/>
            <person name="Klotz M.G."/>
            <person name="Kong W.W."/>
            <person name="Land M."/>
            <person name="Lapidus A."/>
            <person name="Larimer F.W."/>
            <person name="Longo D.L."/>
            <person name="Lucas S."/>
            <person name="Malfatti S.A."/>
            <person name="Massey S.E."/>
            <person name="Martin D.D."/>
            <person name="McCuddin Z."/>
            <person name="Meyer F."/>
            <person name="Moore J.L."/>
            <person name="Ocampo L.H. Jr."/>
            <person name="Paul J.H."/>
            <person name="Paulsen I.T."/>
            <person name="Reep D.K."/>
            <person name="Ren Q."/>
            <person name="Ross R.L."/>
            <person name="Sato P.Y."/>
            <person name="Thomas P."/>
            <person name="Tinkham L.E."/>
            <person name="Zeruth G.T."/>
        </authorList>
    </citation>
    <scope>NUCLEOTIDE SEQUENCE [LARGE SCALE GENOMIC DNA]</scope>
    <source>
        <strain>DSM 25203 / XCL-2</strain>
    </source>
</reference>
<dbReference type="EC" id="2.5.1.19" evidence="1"/>
<dbReference type="EMBL" id="CP000109">
    <property type="protein sequence ID" value="ABB41791.1"/>
    <property type="molecule type" value="Genomic_DNA"/>
</dbReference>
<dbReference type="SMR" id="Q31GD2"/>
<dbReference type="STRING" id="317025.Tcr_1196"/>
<dbReference type="KEGG" id="tcx:Tcr_1196"/>
<dbReference type="eggNOG" id="COG0128">
    <property type="taxonomic scope" value="Bacteria"/>
</dbReference>
<dbReference type="HOGENOM" id="CLU_024321_0_1_6"/>
<dbReference type="OrthoDB" id="9809920at2"/>
<dbReference type="UniPathway" id="UPA00053">
    <property type="reaction ID" value="UER00089"/>
</dbReference>
<dbReference type="GO" id="GO:0005737">
    <property type="term" value="C:cytoplasm"/>
    <property type="evidence" value="ECO:0007669"/>
    <property type="project" value="UniProtKB-SubCell"/>
</dbReference>
<dbReference type="GO" id="GO:0003866">
    <property type="term" value="F:3-phosphoshikimate 1-carboxyvinyltransferase activity"/>
    <property type="evidence" value="ECO:0007669"/>
    <property type="project" value="UniProtKB-UniRule"/>
</dbReference>
<dbReference type="GO" id="GO:0008652">
    <property type="term" value="P:amino acid biosynthetic process"/>
    <property type="evidence" value="ECO:0007669"/>
    <property type="project" value="UniProtKB-KW"/>
</dbReference>
<dbReference type="GO" id="GO:0009073">
    <property type="term" value="P:aromatic amino acid family biosynthetic process"/>
    <property type="evidence" value="ECO:0007669"/>
    <property type="project" value="UniProtKB-KW"/>
</dbReference>
<dbReference type="GO" id="GO:0009423">
    <property type="term" value="P:chorismate biosynthetic process"/>
    <property type="evidence" value="ECO:0007669"/>
    <property type="project" value="UniProtKB-UniRule"/>
</dbReference>
<dbReference type="CDD" id="cd01556">
    <property type="entry name" value="EPSP_synthase"/>
    <property type="match status" value="1"/>
</dbReference>
<dbReference type="FunFam" id="3.65.10.10:FF:000005">
    <property type="entry name" value="3-phosphoshikimate 1-carboxyvinyltransferase"/>
    <property type="match status" value="1"/>
</dbReference>
<dbReference type="FunFam" id="3.65.10.10:FF:000006">
    <property type="entry name" value="3-phosphoshikimate 1-carboxyvinyltransferase"/>
    <property type="match status" value="1"/>
</dbReference>
<dbReference type="Gene3D" id="3.65.10.10">
    <property type="entry name" value="Enolpyruvate transferase domain"/>
    <property type="match status" value="2"/>
</dbReference>
<dbReference type="HAMAP" id="MF_00210">
    <property type="entry name" value="EPSP_synth"/>
    <property type="match status" value="1"/>
</dbReference>
<dbReference type="InterPro" id="IPR001986">
    <property type="entry name" value="Enolpyruvate_Tfrase_dom"/>
</dbReference>
<dbReference type="InterPro" id="IPR036968">
    <property type="entry name" value="Enolpyruvate_Tfrase_sf"/>
</dbReference>
<dbReference type="InterPro" id="IPR006264">
    <property type="entry name" value="EPSP_synthase"/>
</dbReference>
<dbReference type="InterPro" id="IPR023193">
    <property type="entry name" value="EPSP_synthase_CS"/>
</dbReference>
<dbReference type="InterPro" id="IPR013792">
    <property type="entry name" value="RNA3'P_cycl/enolpyr_Trfase_a/b"/>
</dbReference>
<dbReference type="NCBIfam" id="TIGR01356">
    <property type="entry name" value="aroA"/>
    <property type="match status" value="1"/>
</dbReference>
<dbReference type="PANTHER" id="PTHR21090">
    <property type="entry name" value="AROM/DEHYDROQUINATE SYNTHASE"/>
    <property type="match status" value="1"/>
</dbReference>
<dbReference type="PANTHER" id="PTHR21090:SF5">
    <property type="entry name" value="PENTAFUNCTIONAL AROM POLYPEPTIDE"/>
    <property type="match status" value="1"/>
</dbReference>
<dbReference type="Pfam" id="PF00275">
    <property type="entry name" value="EPSP_synthase"/>
    <property type="match status" value="1"/>
</dbReference>
<dbReference type="PIRSF" id="PIRSF000505">
    <property type="entry name" value="EPSPS"/>
    <property type="match status" value="1"/>
</dbReference>
<dbReference type="SUPFAM" id="SSF55205">
    <property type="entry name" value="EPT/RTPC-like"/>
    <property type="match status" value="1"/>
</dbReference>
<dbReference type="PROSITE" id="PS00104">
    <property type="entry name" value="EPSP_SYNTHASE_1"/>
    <property type="match status" value="1"/>
</dbReference>
<dbReference type="PROSITE" id="PS00885">
    <property type="entry name" value="EPSP_SYNTHASE_2"/>
    <property type="match status" value="1"/>
</dbReference>
<sequence length="445" mass="46823">MSNNIQFKVQPGGTIKGRIRVPGDKSISHRSIMLGSIAEGVTQVTGFLEGDDSLATLKAFQAMGVEIEGPNQGNVTIHGVGLKGLKKPDHPLDMGNSGTAMRLMAGILAGQDFECELIGDASLSKRPMKRVTSPLADMGARIDTAEGGKPPLKIHPSSDLKGIDYTLPMASAQVKSCVLLAGLYAEGETTVIEPAPTRDHTERMLNGFGYPVQSEKLDEMQTKVTLAGGGKLTAKNIDVPSDISSAAFFMVAAAVAEEADLVIEHVGINPTRTGVIDILKLMGADITLENEATVGGEPVADVRIKSSKLKGIKIPEALVPLAIDEFPVLFVAAASAEGQTILSGAEELRVKECDRIQVMADALVAVGIDAQPTEDGMIINGGLQKAQSAEIQSHHDHRISMAMTIAGLNAVSEITIDDCANVRTSFPTFIELANTVGLNVTAVEV</sequence>
<comment type="function">
    <text evidence="1">Catalyzes the transfer of the enolpyruvyl moiety of phosphoenolpyruvate (PEP) to the 5-hydroxyl of shikimate-3-phosphate (S3P) to produce enolpyruvyl shikimate-3-phosphate and inorganic phosphate.</text>
</comment>
<comment type="catalytic activity">
    <reaction evidence="1">
        <text>3-phosphoshikimate + phosphoenolpyruvate = 5-O-(1-carboxyvinyl)-3-phosphoshikimate + phosphate</text>
        <dbReference type="Rhea" id="RHEA:21256"/>
        <dbReference type="ChEBI" id="CHEBI:43474"/>
        <dbReference type="ChEBI" id="CHEBI:57701"/>
        <dbReference type="ChEBI" id="CHEBI:58702"/>
        <dbReference type="ChEBI" id="CHEBI:145989"/>
        <dbReference type="EC" id="2.5.1.19"/>
    </reaction>
    <physiologicalReaction direction="left-to-right" evidence="1">
        <dbReference type="Rhea" id="RHEA:21257"/>
    </physiologicalReaction>
</comment>
<comment type="pathway">
    <text evidence="1">Metabolic intermediate biosynthesis; chorismate biosynthesis; chorismate from D-erythrose 4-phosphate and phosphoenolpyruvate: step 6/7.</text>
</comment>
<comment type="subunit">
    <text evidence="1">Monomer.</text>
</comment>
<comment type="subcellular location">
    <subcellularLocation>
        <location evidence="1">Cytoplasm</location>
    </subcellularLocation>
</comment>
<comment type="similarity">
    <text evidence="1">Belongs to the EPSP synthase family.</text>
</comment>
<accession>Q31GD2</accession>
<keyword id="KW-0028">Amino-acid biosynthesis</keyword>
<keyword id="KW-0057">Aromatic amino acid biosynthesis</keyword>
<keyword id="KW-0963">Cytoplasm</keyword>
<keyword id="KW-0808">Transferase</keyword>
<evidence type="ECO:0000255" key="1">
    <source>
        <dbReference type="HAMAP-Rule" id="MF_00210"/>
    </source>
</evidence>
<gene>
    <name evidence="1" type="primary">aroA</name>
    <name type="ordered locus">Tcr_1196</name>
</gene>
<protein>
    <recommendedName>
        <fullName evidence="1">3-phosphoshikimate 1-carboxyvinyltransferase</fullName>
        <ecNumber evidence="1">2.5.1.19</ecNumber>
    </recommendedName>
    <alternativeName>
        <fullName evidence="1">5-enolpyruvylshikimate-3-phosphate synthase</fullName>
        <shortName evidence="1">EPSP synthase</shortName>
        <shortName evidence="1">EPSPS</shortName>
    </alternativeName>
</protein>